<organism>
    <name type="scientific">Homo sapiens</name>
    <name type="common">Human</name>
    <dbReference type="NCBI Taxonomy" id="9606"/>
    <lineage>
        <taxon>Eukaryota</taxon>
        <taxon>Metazoa</taxon>
        <taxon>Chordata</taxon>
        <taxon>Craniata</taxon>
        <taxon>Vertebrata</taxon>
        <taxon>Euteleostomi</taxon>
        <taxon>Mammalia</taxon>
        <taxon>Eutheria</taxon>
        <taxon>Euarchontoglires</taxon>
        <taxon>Primates</taxon>
        <taxon>Haplorrhini</taxon>
        <taxon>Catarrhini</taxon>
        <taxon>Hominidae</taxon>
        <taxon>Homo</taxon>
    </lineage>
</organism>
<accession>Q9BXA9</accession>
<accession>Q9UGH1</accession>
<keyword id="KW-0002">3D-structure</keyword>
<keyword id="KW-0025">Alternative splicing</keyword>
<keyword id="KW-0238">DNA-binding</keyword>
<keyword id="KW-0479">Metal-binding</keyword>
<keyword id="KW-0539">Nucleus</keyword>
<keyword id="KW-0597">Phosphoprotein</keyword>
<keyword id="KW-1267">Proteomics identification</keyword>
<keyword id="KW-1185">Reference proteome</keyword>
<keyword id="KW-0677">Repeat</keyword>
<keyword id="KW-0804">Transcription</keyword>
<keyword id="KW-0805">Transcription regulation</keyword>
<keyword id="KW-0862">Zinc</keyword>
<keyword id="KW-0863">Zinc-finger</keyword>
<dbReference type="EMBL" id="AF347021">
    <property type="protein sequence ID" value="AAK18311.1"/>
    <property type="molecule type" value="Genomic_DNA"/>
</dbReference>
<dbReference type="EMBL" id="AJ007421">
    <property type="protein sequence ID" value="CAB65124.1"/>
    <property type="molecule type" value="Genomic_DNA"/>
</dbReference>
<dbReference type="EMBL" id="AC099689">
    <property type="status" value="NOT_ANNOTATED_CDS"/>
    <property type="molecule type" value="Genomic_DNA"/>
</dbReference>
<dbReference type="CCDS" id="CCDS12013.1">
    <molecule id="Q9BXA9-1"/>
</dbReference>
<dbReference type="RefSeq" id="NP_741996.2">
    <molecule id="Q9BXA9-1"/>
    <property type="nucleotide sequence ID" value="NM_171999.4"/>
</dbReference>
<dbReference type="PDB" id="7Y3L">
    <property type="method" value="X-ray"/>
    <property type="resolution" value="2.50 A"/>
    <property type="chains" value="A=1101-1167"/>
</dbReference>
<dbReference type="PDBsum" id="7Y3L"/>
<dbReference type="SMR" id="Q9BXA9"/>
<dbReference type="BioGRID" id="118043">
    <property type="interactions" value="19"/>
</dbReference>
<dbReference type="FunCoup" id="Q9BXA9">
    <property type="interactions" value="580"/>
</dbReference>
<dbReference type="IntAct" id="Q9BXA9">
    <property type="interactions" value="11"/>
</dbReference>
<dbReference type="MINT" id="Q9BXA9"/>
<dbReference type="STRING" id="9606.ENSP00000441823"/>
<dbReference type="GlyGen" id="Q9BXA9">
    <property type="glycosylation" value="5 sites"/>
</dbReference>
<dbReference type="iPTMnet" id="Q9BXA9"/>
<dbReference type="PhosphoSitePlus" id="Q9BXA9"/>
<dbReference type="BioMuta" id="SALL3"/>
<dbReference type="DMDM" id="296452896"/>
<dbReference type="jPOST" id="Q9BXA9"/>
<dbReference type="MassIVE" id="Q9BXA9"/>
<dbReference type="PaxDb" id="9606-ENSP00000441823"/>
<dbReference type="PeptideAtlas" id="Q9BXA9"/>
<dbReference type="ProteomicsDB" id="79393">
    <molecule id="Q9BXA9-1"/>
</dbReference>
<dbReference type="ProteomicsDB" id="79394">
    <molecule id="Q9BXA9-2"/>
</dbReference>
<dbReference type="ProteomicsDB" id="79395">
    <molecule id="Q9BXA9-3"/>
</dbReference>
<dbReference type="ProteomicsDB" id="79396">
    <molecule id="Q9BXA9-4"/>
</dbReference>
<dbReference type="Pumba" id="Q9BXA9"/>
<dbReference type="Antibodypedia" id="49173">
    <property type="antibodies" value="24 antibodies from 12 providers"/>
</dbReference>
<dbReference type="DNASU" id="27164"/>
<dbReference type="Ensembl" id="ENST00000536229.7">
    <molecule id="Q9BXA9-3"/>
    <property type="protein sequence ID" value="ENSP00000439975.3"/>
    <property type="gene ID" value="ENSG00000256463.10"/>
</dbReference>
<dbReference type="Ensembl" id="ENST00000537592.7">
    <molecule id="Q9BXA9-1"/>
    <property type="protein sequence ID" value="ENSP00000441823.2"/>
    <property type="gene ID" value="ENSG00000256463.10"/>
</dbReference>
<dbReference type="Ensembl" id="ENST00000575389.6">
    <molecule id="Q9BXA9-2"/>
    <property type="protein sequence ID" value="ENSP00000458360.2"/>
    <property type="gene ID" value="ENSG00000256463.10"/>
</dbReference>
<dbReference type="Ensembl" id="ENST00000614883.4">
    <molecule id="Q9BXA9-1"/>
    <property type="protein sequence ID" value="ENSP00000478953.1"/>
    <property type="gene ID" value="ENSG00000277015.4"/>
</dbReference>
<dbReference type="Ensembl" id="ENST00000631929.1">
    <molecule id="Q9BXA9-2"/>
    <property type="protein sequence ID" value="ENSP00000488140.1"/>
    <property type="gene ID" value="ENSG00000277015.4"/>
</dbReference>
<dbReference type="Ensembl" id="ENST00000633643.1">
    <molecule id="Q9BXA9-3"/>
    <property type="protein sequence ID" value="ENSP00000488722.1"/>
    <property type="gene ID" value="ENSG00000277015.4"/>
</dbReference>
<dbReference type="GeneID" id="27164"/>
<dbReference type="KEGG" id="hsa:27164"/>
<dbReference type="MANE-Select" id="ENST00000537592.7">
    <property type="protein sequence ID" value="ENSP00000441823.2"/>
    <property type="RefSeq nucleotide sequence ID" value="NM_171999.4"/>
    <property type="RefSeq protein sequence ID" value="NP_741996.2"/>
</dbReference>
<dbReference type="UCSC" id="uc002lmt.4">
    <molecule id="Q9BXA9-1"/>
    <property type="organism name" value="human"/>
</dbReference>
<dbReference type="AGR" id="HGNC:10527"/>
<dbReference type="CTD" id="27164"/>
<dbReference type="DisGeNET" id="27164"/>
<dbReference type="GeneCards" id="SALL3"/>
<dbReference type="HGNC" id="HGNC:10527">
    <property type="gene designation" value="SALL3"/>
</dbReference>
<dbReference type="HPA" id="ENSG00000256463">
    <property type="expression patterns" value="Group enriched (brain, kidney, prostate, vagina)"/>
</dbReference>
<dbReference type="MIM" id="605079">
    <property type="type" value="gene"/>
</dbReference>
<dbReference type="neXtProt" id="NX_Q9BXA9"/>
<dbReference type="OpenTargets" id="ENSG00000256463"/>
<dbReference type="PharmGKB" id="PA34935"/>
<dbReference type="VEuPathDB" id="HostDB:ENSG00000256463"/>
<dbReference type="eggNOG" id="KOG1074">
    <property type="taxonomic scope" value="Eukaryota"/>
</dbReference>
<dbReference type="GeneTree" id="ENSGT00940000159356"/>
<dbReference type="InParanoid" id="Q9BXA9"/>
<dbReference type="OMA" id="LPCANAR"/>
<dbReference type="OrthoDB" id="8749569at2759"/>
<dbReference type="PAN-GO" id="Q9BXA9">
    <property type="GO annotations" value="4 GO annotations based on evolutionary models"/>
</dbReference>
<dbReference type="PhylomeDB" id="Q9BXA9"/>
<dbReference type="TreeFam" id="TF317003"/>
<dbReference type="PathwayCommons" id="Q9BXA9"/>
<dbReference type="BioGRID-ORCS" id="27164">
    <property type="hits" value="10 hits in 1165 CRISPR screens"/>
</dbReference>
<dbReference type="GeneWiki" id="SALL3"/>
<dbReference type="GenomeRNAi" id="27164"/>
<dbReference type="Pharos" id="Q9BXA9">
    <property type="development level" value="Tbio"/>
</dbReference>
<dbReference type="PRO" id="PR:Q9BXA9"/>
<dbReference type="Proteomes" id="UP000005640">
    <property type="component" value="Chromosome 18"/>
</dbReference>
<dbReference type="RNAct" id="Q9BXA9">
    <property type="molecule type" value="protein"/>
</dbReference>
<dbReference type="Bgee" id="ENSG00000256463">
    <property type="expression patterns" value="Expressed in ventricular zone and 56 other cell types or tissues"/>
</dbReference>
<dbReference type="ExpressionAtlas" id="Q9BXA9">
    <property type="expression patterns" value="baseline and differential"/>
</dbReference>
<dbReference type="GO" id="GO:0005634">
    <property type="term" value="C:nucleus"/>
    <property type="evidence" value="ECO:0000318"/>
    <property type="project" value="GO_Central"/>
</dbReference>
<dbReference type="GO" id="GO:0003677">
    <property type="term" value="F:DNA binding"/>
    <property type="evidence" value="ECO:0007669"/>
    <property type="project" value="UniProtKB-KW"/>
</dbReference>
<dbReference type="GO" id="GO:0000981">
    <property type="term" value="F:DNA-binding transcription factor activity, RNA polymerase II-specific"/>
    <property type="evidence" value="ECO:0000318"/>
    <property type="project" value="GO_Central"/>
</dbReference>
<dbReference type="GO" id="GO:0008270">
    <property type="term" value="F:zinc ion binding"/>
    <property type="evidence" value="ECO:0007669"/>
    <property type="project" value="UniProtKB-KW"/>
</dbReference>
<dbReference type="GO" id="GO:0006357">
    <property type="term" value="P:regulation of transcription by RNA polymerase II"/>
    <property type="evidence" value="ECO:0000318"/>
    <property type="project" value="GO_Central"/>
</dbReference>
<dbReference type="CDD" id="cd20908">
    <property type="entry name" value="SUF4-like"/>
    <property type="match status" value="1"/>
</dbReference>
<dbReference type="FunFam" id="3.30.160.60:FF:002951">
    <property type="entry name" value="Sal-like protein 3"/>
    <property type="match status" value="1"/>
</dbReference>
<dbReference type="FunFam" id="3.30.160.60:FF:000689">
    <property type="entry name" value="Spalt like transcription factor 1"/>
    <property type="match status" value="1"/>
</dbReference>
<dbReference type="FunFam" id="3.30.160.60:FF:000961">
    <property type="entry name" value="Spalt like transcription factor 3"/>
    <property type="match status" value="1"/>
</dbReference>
<dbReference type="FunFam" id="3.30.160.60:FF:001858">
    <property type="entry name" value="Spalt like transcription factor 3"/>
    <property type="match status" value="1"/>
</dbReference>
<dbReference type="FunFam" id="3.30.160.60:FF:000025">
    <property type="entry name" value="Spalt-like transcription factor 1"/>
    <property type="match status" value="1"/>
</dbReference>
<dbReference type="FunFam" id="3.30.160.60:FF:000260">
    <property type="entry name" value="Spalt-like transcription factor 1"/>
    <property type="match status" value="1"/>
</dbReference>
<dbReference type="FunFam" id="3.30.160.60:FF:000341">
    <property type="entry name" value="Spalt-like transcription factor 1"/>
    <property type="match status" value="1"/>
</dbReference>
<dbReference type="FunFam" id="3.30.160.60:FF:000215">
    <property type="entry name" value="Spalt-like transcription factor 3"/>
    <property type="match status" value="1"/>
</dbReference>
<dbReference type="Gene3D" id="3.30.160.60">
    <property type="entry name" value="Classic Zinc Finger"/>
    <property type="match status" value="8"/>
</dbReference>
<dbReference type="InterPro" id="IPR051565">
    <property type="entry name" value="Sal_C2H2-zinc-finger"/>
</dbReference>
<dbReference type="InterPro" id="IPR036236">
    <property type="entry name" value="Znf_C2H2_sf"/>
</dbReference>
<dbReference type="InterPro" id="IPR013087">
    <property type="entry name" value="Znf_C2H2_type"/>
</dbReference>
<dbReference type="PANTHER" id="PTHR23233">
    <property type="entry name" value="SAL-LIKE PROTEIN"/>
    <property type="match status" value="1"/>
</dbReference>
<dbReference type="PANTHER" id="PTHR23233:SF46">
    <property type="entry name" value="SAL-LIKE PROTEIN 3"/>
    <property type="match status" value="1"/>
</dbReference>
<dbReference type="Pfam" id="PF00096">
    <property type="entry name" value="zf-C2H2"/>
    <property type="match status" value="5"/>
</dbReference>
<dbReference type="Pfam" id="PF12874">
    <property type="entry name" value="zf-met"/>
    <property type="match status" value="1"/>
</dbReference>
<dbReference type="SMART" id="SM00355">
    <property type="entry name" value="ZnF_C2H2"/>
    <property type="match status" value="10"/>
</dbReference>
<dbReference type="SUPFAM" id="SSF57667">
    <property type="entry name" value="beta-beta-alpha zinc fingers"/>
    <property type="match status" value="5"/>
</dbReference>
<dbReference type="PROSITE" id="PS00028">
    <property type="entry name" value="ZINC_FINGER_C2H2_1"/>
    <property type="match status" value="9"/>
</dbReference>
<dbReference type="PROSITE" id="PS50157">
    <property type="entry name" value="ZINC_FINGER_C2H2_2"/>
    <property type="match status" value="8"/>
</dbReference>
<evidence type="ECO:0000255" key="1">
    <source>
        <dbReference type="PROSITE-ProRule" id="PRU00042"/>
    </source>
</evidence>
<evidence type="ECO:0000256" key="2">
    <source>
        <dbReference type="SAM" id="MobiDB-lite"/>
    </source>
</evidence>
<evidence type="ECO:0000269" key="3">
    <source>
    </source>
</evidence>
<evidence type="ECO:0000269" key="4">
    <source ref="1"/>
</evidence>
<evidence type="ECO:0000303" key="5">
    <source>
    </source>
</evidence>
<evidence type="ECO:0000305" key="6"/>
<evidence type="ECO:0007744" key="7">
    <source>
    </source>
</evidence>
<evidence type="ECO:0007829" key="8">
    <source>
        <dbReference type="PDB" id="7Y3L"/>
    </source>
</evidence>
<sequence length="1300" mass="135346">MSRRKQAKPQHLKSDEELLPPDGAPEHAAPGEGAEDADSGPESRSGGEETSVCEKCCAEFFKWADFLEHQRSCTKLPPVLIVHEDAPAPPPEDFPEPSPASSPSERAESEAAEEAGAEGAEGEARPVEKEAEPMDAEPAGDTRAPRPPPAAPAPPTPAYGAPSTNVTLEALLSTKVAVAQFSQGARAAGGSGAGGGVAAAAVPLILEQLMALQQQQIHQLQLIEQIRSQVALMQRPPPRPSLSPAAAPSAPGPAPSQLPGLAALPLSAGAPAAAIAGSGPAAPAAFEGAQPLSRPESGASTPGGPAEPSAPAAPSAAPAPAAPAPAPAPQSAASSQPQSASTPPALAPGSLLGAAPGLPSPLLPQTSASGVIFPNPLVSIAATANALDPLSALMKHRKGKPPNVSVFEPKASAEDPFFKHKCRFCAKVFGSDSALQIHLRSHTGERPFKCNICGNRFSTKGNLKVHFQRHKEKYPHIQMNPYPVPEYLDNVPTCSGIPYGMSLPPEKPVTTWLDSKPVLPTVPTSVGLQLPPTVPGAHGYADSPSATPASRSPQRPSPASSECASLSPGLNHVESGVSATAESPQSLLGGPPLTKAEPVSLPCTNARAGDAPVGAQASAAPTSVDGAPTSLGSPGLPAVSEQFKAQFPFGGLLDSMQTSETSKLQQLVENIDKKMTDPNQCVICHRVLSCQSALKMHYRTHTGERPFKCKICGRAFTTKGNLKTHFGVHRAKPPLRVQHSCPICQKKFTNAVVLQQHIRMHMGGQIPNTPLPEGFQDAMDSELAYDDKNAETLSSYDDDMDENSMEDDAELKDAATDPAKPLLSYAGSCPPSPPSVISSIAALENQMKMIDSVMSCQQLTGLKSVENGSGESDRLSNDSSSAVGDLESRSAGSPALSESSSSQALSPAPSNGESFRSKSPGLGAPEEPQEIPLKTERPDSPAAAPGSGGAPGRAGIKEEAPFSLLFLSRERGKCPSTVCGVCGKPFACKSALEIHYRSHTKERPFVCALCRRGCSTMGNLKQHLLTHRLKELPSQLFDPNFALGPSQSTPSLISSAAPTMIKMEVNGHGKAMALGEGPPLPAGVQVPAGPQTVMGPGLAPMLAPPPRRTPKQHNCQSCGKTFSSASALQIHERTHTGEKPFGCTICGRAFTTKGNLKVHMGTHMWNNAPARRGRRLSVENPMALLGGDALKFSEMFQKDLAARAMNVDPSFWNQYAAAITNGLAMKNNEISVIQNGGIPQLPVSLGGSALPPLGSMASGMDKARTGSSPPIVSLDKASSETAASRPFTRFIEDNKEIGIN</sequence>
<comment type="function">
    <text>Probable transcription factor.</text>
</comment>
<comment type="subcellular location">
    <subcellularLocation>
        <location evidence="6">Nucleus</location>
    </subcellularLocation>
</comment>
<comment type="alternative products">
    <event type="alternative splicing"/>
    <isoform>
        <id>Q9BXA9-1</id>
        <name>3</name>
        <sequence type="displayed"/>
    </isoform>
    <isoform>
        <id>Q9BXA9-2</id>
        <name>1</name>
        <sequence type="described" ref="VSP_006833"/>
    </isoform>
    <isoform>
        <id>Q9BXA9-3</id>
        <name>2</name>
        <sequence type="described" ref="VSP_006832 VSP_006833"/>
    </isoform>
    <isoform>
        <id>Q9BXA9-4</id>
        <name>4</name>
        <sequence type="described" ref="VSP_006832"/>
    </isoform>
</comment>
<comment type="tissue specificity">
    <text>Widely expressed in adult with highest levels in heart. Expressed in fetal brain (in neurons of hippocampus, cortex, mediodorsal and ventrolateral thalamic nuclei, putamen, cerebellum and brainstem).</text>
</comment>
<comment type="developmental stage">
    <text>In fetal brain of the 24th gestational week.</text>
</comment>
<comment type="miscellaneous">
    <molecule>Isoform 1</molecule>
    <text evidence="6">Lacks two zinc finger domains. Major isoform with isoform 2.</text>
</comment>
<comment type="miscellaneous">
    <molecule>Isoform 2</molecule>
    <text evidence="6">Lacks two zinc finger domains. Major isoform with isoform 1.</text>
</comment>
<comment type="similarity">
    <text evidence="6">Belongs to the sal C2H2-type zinc-finger protein family.</text>
</comment>
<gene>
    <name type="primary">SALL3</name>
    <name type="synonym">ZNF796</name>
</gene>
<proteinExistence type="evidence at protein level"/>
<name>SALL3_HUMAN</name>
<protein>
    <recommendedName>
        <fullName>Sal-like protein 3</fullName>
    </recommendedName>
    <alternativeName>
        <fullName>Zinc finger protein 796</fullName>
    </alternativeName>
    <alternativeName>
        <fullName>Zinc finger protein SALL3</fullName>
        <shortName>hSALL3</shortName>
    </alternativeName>
</protein>
<reference key="1">
    <citation type="submission" date="2001-02" db="EMBL/GenBank/DDBJ databases">
        <title>Exclusion of HSALL3 and refinement of the region for the CCFDN gene.</title>
        <authorList>
            <person name="Gooding R."/>
            <person name="Angelicheva D."/>
            <person name="Blechschmidt K."/>
            <person name="Swoboda K."/>
            <person name="Molnar M."/>
            <person name="Tournev I."/>
            <person name="Kalaydjieva L."/>
        </authorList>
    </citation>
    <scope>NUCLEOTIDE SEQUENCE [GENOMIC DNA] (ISOFORM 3)</scope>
    <scope>VARIANT VAL-593</scope>
</reference>
<reference key="2">
    <citation type="journal article" date="1999" name="Genomics">
        <title>SALL3, a new member of the human spalt-like gene family, maps to 18q23.</title>
        <authorList>
            <person name="Kohlhase J."/>
            <person name="Hausmann S."/>
            <person name="Stojmenovic G."/>
            <person name="Dixkens C."/>
            <person name="Bink K."/>
            <person name="Schulz-Schaeffer W."/>
            <person name="Altmann M."/>
            <person name="Engel W."/>
        </authorList>
    </citation>
    <scope>NUCLEOTIDE SEQUENCE [GENOMIC DNA] OF 29-1300</scope>
    <scope>ALTERNATIVE SPLICING</scope>
</reference>
<reference key="3">
    <citation type="submission" date="2002-07" db="UniProtKB">
        <authorList>
            <person name="Kohlhase J."/>
        </authorList>
    </citation>
    <scope>SEQUENCE REVISION TO 787; 797-802; 808; 1138 AND 1141</scope>
</reference>
<reference key="4">
    <citation type="journal article" date="2005" name="Nature">
        <title>DNA sequence and analysis of human chromosome 18.</title>
        <authorList>
            <person name="Nusbaum C."/>
            <person name="Zody M.C."/>
            <person name="Borowsky M.L."/>
            <person name="Kamal M."/>
            <person name="Kodira C.D."/>
            <person name="Taylor T.D."/>
            <person name="Whittaker C.A."/>
            <person name="Chang J.L."/>
            <person name="Cuomo C.A."/>
            <person name="Dewar K."/>
            <person name="FitzGerald M.G."/>
            <person name="Yang X."/>
            <person name="Abouelleil A."/>
            <person name="Allen N.R."/>
            <person name="Anderson S."/>
            <person name="Bloom T."/>
            <person name="Bugalter B."/>
            <person name="Butler J."/>
            <person name="Cook A."/>
            <person name="DeCaprio D."/>
            <person name="Engels R."/>
            <person name="Garber M."/>
            <person name="Gnirke A."/>
            <person name="Hafez N."/>
            <person name="Hall J.L."/>
            <person name="Norman C.H."/>
            <person name="Itoh T."/>
            <person name="Jaffe D.B."/>
            <person name="Kuroki Y."/>
            <person name="Lehoczky J."/>
            <person name="Lui A."/>
            <person name="Macdonald P."/>
            <person name="Mauceli E."/>
            <person name="Mikkelsen T.S."/>
            <person name="Naylor J.W."/>
            <person name="Nicol R."/>
            <person name="Nguyen C."/>
            <person name="Noguchi H."/>
            <person name="O'Leary S.B."/>
            <person name="Piqani B."/>
            <person name="Smith C.L."/>
            <person name="Talamas J.A."/>
            <person name="Topham K."/>
            <person name="Totoki Y."/>
            <person name="Toyoda A."/>
            <person name="Wain H.M."/>
            <person name="Young S.K."/>
            <person name="Zeng Q."/>
            <person name="Zimmer A.R."/>
            <person name="Fujiyama A."/>
            <person name="Hattori M."/>
            <person name="Birren B.W."/>
            <person name="Sakaki Y."/>
            <person name="Lander E.S."/>
        </authorList>
    </citation>
    <scope>NUCLEOTIDE SEQUENCE [LARGE SCALE GENOMIC DNA]</scope>
</reference>
<reference key="5">
    <citation type="journal article" date="2006" name="Dev. Biol.">
        <title>The vertebrate spalt genes in development and disease.</title>
        <authorList>
            <person name="Sweetman D."/>
            <person name="Muensterberg A."/>
        </authorList>
    </citation>
    <scope>DOMAIN</scope>
</reference>
<reference key="6">
    <citation type="journal article" date="2011" name="Sci. Signal.">
        <title>System-wide temporal characterization of the proteome and phosphoproteome of human embryonic stem cell differentiation.</title>
        <authorList>
            <person name="Rigbolt K.T."/>
            <person name="Prokhorova T.A."/>
            <person name="Akimov V."/>
            <person name="Henningsen J."/>
            <person name="Johansen P.T."/>
            <person name="Kratchmarova I."/>
            <person name="Kassem M."/>
            <person name="Mann M."/>
            <person name="Olsen J.V."/>
            <person name="Blagoev B."/>
        </authorList>
    </citation>
    <scope>PHOSPHORYLATION [LARGE SCALE ANALYSIS] AT SER-109; SER-919 AND SER-1177</scope>
    <scope>IDENTIFICATION BY MASS SPECTROMETRY [LARGE SCALE ANALYSIS]</scope>
</reference>
<reference key="7">
    <citation type="journal article" date="2006" name="Science">
        <title>The consensus coding sequences of human breast and colorectal cancers.</title>
        <authorList>
            <person name="Sjoeblom T."/>
            <person name="Jones S."/>
            <person name="Wood L.D."/>
            <person name="Parsons D.W."/>
            <person name="Lin J."/>
            <person name="Barber T.D."/>
            <person name="Mandelker D."/>
            <person name="Leary R.J."/>
            <person name="Ptak J."/>
            <person name="Silliman N."/>
            <person name="Szabo S."/>
            <person name="Buckhaults P."/>
            <person name="Farrell C."/>
            <person name="Meeh P."/>
            <person name="Markowitz S.D."/>
            <person name="Willis J."/>
            <person name="Dawson D."/>
            <person name="Willson J.K.V."/>
            <person name="Gazdar A.F."/>
            <person name="Hartigan J."/>
            <person name="Wu L."/>
            <person name="Liu C."/>
            <person name="Parmigiani G."/>
            <person name="Park B.H."/>
            <person name="Bachman K.E."/>
            <person name="Papadopoulos N."/>
            <person name="Vogelstein B."/>
            <person name="Kinzler K.W."/>
            <person name="Velculescu V.E."/>
        </authorList>
    </citation>
    <scope>VARIANT [LARGE SCALE ANALYSIS] HIS-143</scope>
</reference>
<feature type="chain" id="PRO_0000047024" description="Sal-like protein 3">
    <location>
        <begin position="1"/>
        <end position="1300"/>
    </location>
</feature>
<feature type="zinc finger region" description="C2H2-type 1; atypical" evidence="1 5">
    <location>
        <begin position="51"/>
        <end position="73"/>
    </location>
</feature>
<feature type="zinc finger region" description="C2H2-type 2" evidence="1">
    <location>
        <begin position="420"/>
        <end position="442"/>
    </location>
</feature>
<feature type="zinc finger region" description="C2H2-type 3" evidence="1">
    <location>
        <begin position="448"/>
        <end position="470"/>
    </location>
</feature>
<feature type="zinc finger region" description="C2H2-type 4" evidence="1">
    <location>
        <begin position="679"/>
        <end position="701"/>
    </location>
</feature>
<feature type="zinc finger region" description="C2H2-type 5" evidence="1">
    <location>
        <begin position="707"/>
        <end position="729"/>
    </location>
</feature>
<feature type="zinc finger region" description="C2H2-type 6" evidence="1">
    <location>
        <begin position="739"/>
        <end position="761"/>
    </location>
</feature>
<feature type="zinc finger region" description="C2H2-type 7" evidence="1">
    <location>
        <begin position="977"/>
        <end position="999"/>
    </location>
</feature>
<feature type="zinc finger region" description="C2H2-type 8" evidence="1">
    <location>
        <begin position="1005"/>
        <end position="1027"/>
    </location>
</feature>
<feature type="zinc finger region" description="C2H2-type 9" evidence="1">
    <location>
        <begin position="1113"/>
        <end position="1135"/>
    </location>
</feature>
<feature type="zinc finger region" description="C2H2-type 10" evidence="1">
    <location>
        <begin position="1141"/>
        <end position="1163"/>
    </location>
</feature>
<feature type="region of interest" description="Disordered" evidence="2">
    <location>
        <begin position="1"/>
        <end position="51"/>
    </location>
</feature>
<feature type="region of interest" description="Disordered" evidence="2">
    <location>
        <begin position="84"/>
        <end position="162"/>
    </location>
</feature>
<feature type="region of interest" description="Disordered" evidence="2">
    <location>
        <begin position="234"/>
        <end position="258"/>
    </location>
</feature>
<feature type="region of interest" description="Disordered" evidence="2">
    <location>
        <begin position="277"/>
        <end position="352"/>
    </location>
</feature>
<feature type="region of interest" description="Disordered" evidence="2">
    <location>
        <begin position="523"/>
        <end position="633"/>
    </location>
</feature>
<feature type="region of interest" description="Disordered" evidence="2">
    <location>
        <begin position="864"/>
        <end position="955"/>
    </location>
</feature>
<feature type="region of interest" description="Disordered" evidence="2">
    <location>
        <begin position="1259"/>
        <end position="1279"/>
    </location>
</feature>
<feature type="compositionally biased region" description="Basic residues" evidence="2">
    <location>
        <begin position="1"/>
        <end position="11"/>
    </location>
</feature>
<feature type="compositionally biased region" description="Pro residues" evidence="2">
    <location>
        <begin position="87"/>
        <end position="100"/>
    </location>
</feature>
<feature type="compositionally biased region" description="Basic and acidic residues" evidence="2">
    <location>
        <begin position="122"/>
        <end position="132"/>
    </location>
</feature>
<feature type="compositionally biased region" description="Pro residues" evidence="2">
    <location>
        <begin position="145"/>
        <end position="157"/>
    </location>
</feature>
<feature type="compositionally biased region" description="Low complexity" evidence="2">
    <location>
        <begin position="277"/>
        <end position="319"/>
    </location>
</feature>
<feature type="compositionally biased region" description="Low complexity" evidence="2">
    <location>
        <begin position="329"/>
        <end position="352"/>
    </location>
</feature>
<feature type="compositionally biased region" description="Low complexity" evidence="2">
    <location>
        <begin position="543"/>
        <end position="561"/>
    </location>
</feature>
<feature type="compositionally biased region" description="Polar residues" evidence="2">
    <location>
        <begin position="577"/>
        <end position="586"/>
    </location>
</feature>
<feature type="compositionally biased region" description="Low complexity" evidence="2">
    <location>
        <begin position="889"/>
        <end position="910"/>
    </location>
</feature>
<feature type="modified residue" description="Phosphoserine" evidence="7">
    <location>
        <position position="109"/>
    </location>
</feature>
<feature type="modified residue" description="Phosphoserine" evidence="7">
    <location>
        <position position="919"/>
    </location>
</feature>
<feature type="modified residue" description="Phosphoserine" evidence="7">
    <location>
        <position position="1177"/>
    </location>
</feature>
<feature type="splice variant" id="VSP_006832" description="In isoform 2 and isoform 4." evidence="6">
    <location>
        <begin position="1"/>
        <end position="133"/>
    </location>
</feature>
<feature type="splice variant" id="VSP_006833" description="In isoform 1 and isoform 2." evidence="6">
    <location>
        <begin position="973"/>
        <end position="1044"/>
    </location>
</feature>
<feature type="sequence variant" id="VAR_035552" description="In a colorectal cancer sample; somatic mutation." evidence="3">
    <original>R</original>
    <variation>H</variation>
    <location>
        <position position="143"/>
    </location>
</feature>
<feature type="sequence variant" id="VAR_059887" description="In dbSNP:rs7240860.">
    <original>T</original>
    <variation>A</variation>
    <location>
        <position position="533"/>
    </location>
</feature>
<feature type="sequence variant" id="VAR_014132" description="In dbSNP:rs2447437." evidence="4">
    <original>L</original>
    <variation>V</variation>
    <location>
        <position position="593"/>
    </location>
</feature>
<feature type="sequence conflict" description="In Ref. 1; AAK18311 and 2; CAB65124." evidence="6" ref="1 2">
    <original>P</original>
    <variation>H</variation>
    <location>
        <position position="91"/>
    </location>
</feature>
<feature type="sequence conflict" description="In Ref. 2; CAB65124." evidence="6" ref="2">
    <original>R</original>
    <variation>C</variation>
    <location>
        <position position="235"/>
    </location>
</feature>
<feature type="sequence conflict" description="In Ref. 2; CAB65124." evidence="6" ref="2">
    <original>D</original>
    <variation>N</variation>
    <location>
        <position position="787"/>
    </location>
</feature>
<feature type="sequence conflict" description="In Ref. 2; CAB65124." evidence="6" ref="2">
    <original>DDDMDE</original>
    <variation>NDNLDK</variation>
    <location>
        <begin position="797"/>
        <end position="802"/>
    </location>
</feature>
<feature type="sequence conflict" description="In Ref. 2; CAB65124." evidence="6" ref="2">
    <original>D</original>
    <variation>N</variation>
    <location>
        <position position="808"/>
    </location>
</feature>
<feature type="sequence conflict" description="In Ref. 2; CAB65124." evidence="6" ref="2">
    <original>E</original>
    <variation>K</variation>
    <location>
        <position position="1138"/>
    </location>
</feature>
<feature type="sequence conflict" description="In Ref. 2; CAB65124." evidence="6" ref="2">
    <original>F</original>
    <variation>S</variation>
    <location>
        <position position="1141"/>
    </location>
</feature>
<feature type="turn" evidence="8">
    <location>
        <begin position="1116"/>
        <end position="1118"/>
    </location>
</feature>
<feature type="strand" evidence="8">
    <location>
        <begin position="1121"/>
        <end position="1124"/>
    </location>
</feature>
<feature type="helix" evidence="8">
    <location>
        <begin position="1125"/>
        <end position="1136"/>
    </location>
</feature>
<feature type="turn" evidence="8">
    <location>
        <begin position="1144"/>
        <end position="1146"/>
    </location>
</feature>
<feature type="strand" evidence="8">
    <location>
        <begin position="1149"/>
        <end position="1152"/>
    </location>
</feature>
<feature type="helix" evidence="8">
    <location>
        <begin position="1153"/>
        <end position="1161"/>
    </location>
</feature>